<gene>
    <name evidence="1" type="primary">cca</name>
    <name type="ordered locus">FTF0108c</name>
</gene>
<evidence type="ECO:0000255" key="1">
    <source>
        <dbReference type="HAMAP-Rule" id="MF_01262"/>
    </source>
</evidence>
<accession>Q14JW7</accession>
<proteinExistence type="inferred from homology"/>
<organism>
    <name type="scientific">Francisella tularensis subsp. tularensis (strain FSC 198)</name>
    <dbReference type="NCBI Taxonomy" id="393115"/>
    <lineage>
        <taxon>Bacteria</taxon>
        <taxon>Pseudomonadati</taxon>
        <taxon>Pseudomonadota</taxon>
        <taxon>Gammaproteobacteria</taxon>
        <taxon>Thiotrichales</taxon>
        <taxon>Francisellaceae</taxon>
        <taxon>Francisella</taxon>
    </lineage>
</organism>
<comment type="function">
    <text evidence="1">Catalyzes the addition and repair of the essential 3'-terminal CCA sequence in tRNAs without using a nucleic acid template. Adds these three nucleotides in the order of C, C, and A to the tRNA nucleotide-73, using CTP and ATP as substrates and producing inorganic pyrophosphate. tRNA 3'-terminal CCA addition is required both for tRNA processing and repair. Also involved in tRNA surveillance by mediating tandem CCA addition to generate a CCACCA at the 3' terminus of unstable tRNAs. While stable tRNAs receive only 3'-terminal CCA, unstable tRNAs are marked with CCACCA and rapidly degraded.</text>
</comment>
<comment type="catalytic activity">
    <reaction evidence="1">
        <text>a tRNA precursor + 2 CTP + ATP = a tRNA with a 3' CCA end + 3 diphosphate</text>
        <dbReference type="Rhea" id="RHEA:14433"/>
        <dbReference type="Rhea" id="RHEA-COMP:10465"/>
        <dbReference type="Rhea" id="RHEA-COMP:10468"/>
        <dbReference type="ChEBI" id="CHEBI:30616"/>
        <dbReference type="ChEBI" id="CHEBI:33019"/>
        <dbReference type="ChEBI" id="CHEBI:37563"/>
        <dbReference type="ChEBI" id="CHEBI:74896"/>
        <dbReference type="ChEBI" id="CHEBI:83071"/>
        <dbReference type="EC" id="2.7.7.72"/>
    </reaction>
</comment>
<comment type="catalytic activity">
    <reaction evidence="1">
        <text>a tRNA with a 3' CCA end + 2 CTP + ATP = a tRNA with a 3' CCACCA end + 3 diphosphate</text>
        <dbReference type="Rhea" id="RHEA:76235"/>
        <dbReference type="Rhea" id="RHEA-COMP:10468"/>
        <dbReference type="Rhea" id="RHEA-COMP:18655"/>
        <dbReference type="ChEBI" id="CHEBI:30616"/>
        <dbReference type="ChEBI" id="CHEBI:33019"/>
        <dbReference type="ChEBI" id="CHEBI:37563"/>
        <dbReference type="ChEBI" id="CHEBI:83071"/>
        <dbReference type="ChEBI" id="CHEBI:195187"/>
    </reaction>
    <physiologicalReaction direction="left-to-right" evidence="1">
        <dbReference type="Rhea" id="RHEA:76236"/>
    </physiologicalReaction>
</comment>
<comment type="cofactor">
    <cofactor evidence="1">
        <name>Mg(2+)</name>
        <dbReference type="ChEBI" id="CHEBI:18420"/>
    </cofactor>
</comment>
<comment type="miscellaneous">
    <text evidence="1">A single active site specifically recognizes both ATP and CTP and is responsible for their addition.</text>
</comment>
<comment type="similarity">
    <text evidence="1">Belongs to the tRNA nucleotidyltransferase/poly(A) polymerase family. Bacterial CCA-adding enzyme type 2 subfamily.</text>
</comment>
<protein>
    <recommendedName>
        <fullName evidence="1">CCA-adding enzyme</fullName>
        <ecNumber evidence="1">2.7.7.72</ecNumber>
    </recommendedName>
    <alternativeName>
        <fullName evidence="1">CCA tRNA nucleotidyltransferase</fullName>
    </alternativeName>
    <alternativeName>
        <fullName evidence="1">tRNA CCA-pyrophosphorylase</fullName>
    </alternativeName>
    <alternativeName>
        <fullName evidence="1">tRNA adenylyl-/cytidylyl- transferase</fullName>
    </alternativeName>
    <alternativeName>
        <fullName evidence="1">tRNA nucleotidyltransferase</fullName>
    </alternativeName>
    <alternativeName>
        <fullName evidence="1">tRNA-NT</fullName>
    </alternativeName>
</protein>
<reference key="1">
    <citation type="journal article" date="2007" name="PLoS ONE">
        <title>Genome sequencing shows that European isolates of Francisella tularensis subspecies tularensis are almost identical to US laboratory strain Schu S4.</title>
        <authorList>
            <person name="Chaudhuri R.R."/>
            <person name="Ren C.-P."/>
            <person name="Desmond L."/>
            <person name="Vincent G.A."/>
            <person name="Silman N.J."/>
            <person name="Brehm J.K."/>
            <person name="Elmore M.J."/>
            <person name="Hudson M.J."/>
            <person name="Forsman M."/>
            <person name="Isherwood K.E."/>
            <person name="Gurycova D."/>
            <person name="Minton N.P."/>
            <person name="Titball R.W."/>
            <person name="Pallen M.J."/>
            <person name="Vipond R."/>
        </authorList>
    </citation>
    <scope>NUCLEOTIDE SEQUENCE [LARGE SCALE GENOMIC DNA]</scope>
    <source>
        <strain>FSC 198</strain>
    </source>
</reference>
<keyword id="KW-0067">ATP-binding</keyword>
<keyword id="KW-0460">Magnesium</keyword>
<keyword id="KW-0479">Metal-binding</keyword>
<keyword id="KW-0547">Nucleotide-binding</keyword>
<keyword id="KW-0548">Nucleotidyltransferase</keyword>
<keyword id="KW-0692">RNA repair</keyword>
<keyword id="KW-0694">RNA-binding</keyword>
<keyword id="KW-0808">Transferase</keyword>
<keyword id="KW-0819">tRNA processing</keyword>
<dbReference type="EC" id="2.7.7.72" evidence="1"/>
<dbReference type="EMBL" id="AM286280">
    <property type="protein sequence ID" value="CAL08124.1"/>
    <property type="molecule type" value="Genomic_DNA"/>
</dbReference>
<dbReference type="RefSeq" id="WP_003019848.1">
    <property type="nucleotide sequence ID" value="NC_008245.1"/>
</dbReference>
<dbReference type="SMR" id="Q14JW7"/>
<dbReference type="KEGG" id="ftf:FTF0108c"/>
<dbReference type="HOGENOM" id="CLU_015961_1_0_6"/>
<dbReference type="GO" id="GO:0005524">
    <property type="term" value="F:ATP binding"/>
    <property type="evidence" value="ECO:0007669"/>
    <property type="project" value="UniProtKB-UniRule"/>
</dbReference>
<dbReference type="GO" id="GO:0004810">
    <property type="term" value="F:CCA tRNA nucleotidyltransferase activity"/>
    <property type="evidence" value="ECO:0007669"/>
    <property type="project" value="UniProtKB-UniRule"/>
</dbReference>
<dbReference type="GO" id="GO:0000287">
    <property type="term" value="F:magnesium ion binding"/>
    <property type="evidence" value="ECO:0007669"/>
    <property type="project" value="UniProtKB-UniRule"/>
</dbReference>
<dbReference type="GO" id="GO:0000049">
    <property type="term" value="F:tRNA binding"/>
    <property type="evidence" value="ECO:0007669"/>
    <property type="project" value="UniProtKB-UniRule"/>
</dbReference>
<dbReference type="GO" id="GO:0042245">
    <property type="term" value="P:RNA repair"/>
    <property type="evidence" value="ECO:0007669"/>
    <property type="project" value="UniProtKB-KW"/>
</dbReference>
<dbReference type="GO" id="GO:0001680">
    <property type="term" value="P:tRNA 3'-terminal CCA addition"/>
    <property type="evidence" value="ECO:0007669"/>
    <property type="project" value="UniProtKB-UniRule"/>
</dbReference>
<dbReference type="CDD" id="cd05398">
    <property type="entry name" value="NT_ClassII-CCAase"/>
    <property type="match status" value="1"/>
</dbReference>
<dbReference type="Gene3D" id="3.30.460.10">
    <property type="entry name" value="Beta Polymerase, domain 2"/>
    <property type="match status" value="1"/>
</dbReference>
<dbReference type="Gene3D" id="1.10.3090.10">
    <property type="entry name" value="cca-adding enzyme, domain 2"/>
    <property type="match status" value="1"/>
</dbReference>
<dbReference type="HAMAP" id="MF_01262">
    <property type="entry name" value="CCA_bact_type2"/>
    <property type="match status" value="1"/>
</dbReference>
<dbReference type="InterPro" id="IPR012006">
    <property type="entry name" value="CCA_bact"/>
</dbReference>
<dbReference type="InterPro" id="IPR043519">
    <property type="entry name" value="NT_sf"/>
</dbReference>
<dbReference type="InterPro" id="IPR002646">
    <property type="entry name" value="PolA_pol_head_dom"/>
</dbReference>
<dbReference type="InterPro" id="IPR032828">
    <property type="entry name" value="PolyA_RNA-bd"/>
</dbReference>
<dbReference type="InterPro" id="IPR050124">
    <property type="entry name" value="tRNA_CCA-adding_enzyme"/>
</dbReference>
<dbReference type="NCBIfam" id="NF009811">
    <property type="entry name" value="PRK13296.1"/>
    <property type="match status" value="1"/>
</dbReference>
<dbReference type="PANTHER" id="PTHR47545">
    <property type="entry name" value="MULTIFUNCTIONAL CCA PROTEIN"/>
    <property type="match status" value="1"/>
</dbReference>
<dbReference type="PANTHER" id="PTHR47545:SF1">
    <property type="entry name" value="MULTIFUNCTIONAL CCA PROTEIN"/>
    <property type="match status" value="1"/>
</dbReference>
<dbReference type="Pfam" id="PF01743">
    <property type="entry name" value="PolyA_pol"/>
    <property type="match status" value="1"/>
</dbReference>
<dbReference type="Pfam" id="PF12627">
    <property type="entry name" value="PolyA_pol_RNAbd"/>
    <property type="match status" value="1"/>
</dbReference>
<dbReference type="PIRSF" id="PIRSF000813">
    <property type="entry name" value="CCA_bact"/>
    <property type="match status" value="1"/>
</dbReference>
<dbReference type="SUPFAM" id="SSF81301">
    <property type="entry name" value="Nucleotidyltransferase"/>
    <property type="match status" value="1"/>
</dbReference>
<dbReference type="SUPFAM" id="SSF81891">
    <property type="entry name" value="Poly A polymerase C-terminal region-like"/>
    <property type="match status" value="1"/>
</dbReference>
<sequence>MKFYLVGGAVRDMLLGITPKDKDWVVVGATEDEMLANGFIKIAANFPVFIHPQTKQEYALARSEKKTASGYHGFEVNFSKYITLEDDLKRRDLTINSIAIDQNNKVIDPFNGQADLQNRILRHTSIAFIEDPLRVVRLARFKAQLSNFNFSIAQEMLALIKELVKTGELNHLTRERLHIEFVKALNNPKIFFTTLKELEALKIIFPNISCFLPLIPNKSFFENPIYKGSNINEKITLCLLKIPQQQLDDIRKEFLLTNKHYKLLKASIAISKILEDRSITAEEIFQLIKNANIIRDKNLFAESLNLYKKYLKICDTITPHRNYQLLQTTINTIKNASIDSLTIKTIPKDKLRNTLKQLKL</sequence>
<feature type="chain" id="PRO_1000054316" description="CCA-adding enzyme">
    <location>
        <begin position="1"/>
        <end position="360"/>
    </location>
</feature>
<feature type="binding site" evidence="1">
    <location>
        <position position="8"/>
    </location>
    <ligand>
        <name>ATP</name>
        <dbReference type="ChEBI" id="CHEBI:30616"/>
    </ligand>
</feature>
<feature type="binding site" evidence="1">
    <location>
        <position position="8"/>
    </location>
    <ligand>
        <name>CTP</name>
        <dbReference type="ChEBI" id="CHEBI:37563"/>
    </ligand>
</feature>
<feature type="binding site" evidence="1">
    <location>
        <position position="11"/>
    </location>
    <ligand>
        <name>ATP</name>
        <dbReference type="ChEBI" id="CHEBI:30616"/>
    </ligand>
</feature>
<feature type="binding site" evidence="1">
    <location>
        <position position="11"/>
    </location>
    <ligand>
        <name>CTP</name>
        <dbReference type="ChEBI" id="CHEBI:37563"/>
    </ligand>
</feature>
<feature type="binding site" evidence="1">
    <location>
        <position position="21"/>
    </location>
    <ligand>
        <name>Mg(2+)</name>
        <dbReference type="ChEBI" id="CHEBI:18420"/>
    </ligand>
</feature>
<feature type="binding site" evidence="1">
    <location>
        <position position="23"/>
    </location>
    <ligand>
        <name>Mg(2+)</name>
        <dbReference type="ChEBI" id="CHEBI:18420"/>
    </ligand>
</feature>
<feature type="binding site" evidence="1">
    <location>
        <position position="91"/>
    </location>
    <ligand>
        <name>ATP</name>
        <dbReference type="ChEBI" id="CHEBI:30616"/>
    </ligand>
</feature>
<feature type="binding site" evidence="1">
    <location>
        <position position="91"/>
    </location>
    <ligand>
        <name>CTP</name>
        <dbReference type="ChEBI" id="CHEBI:37563"/>
    </ligand>
</feature>
<feature type="binding site" evidence="1">
    <location>
        <position position="137"/>
    </location>
    <ligand>
        <name>ATP</name>
        <dbReference type="ChEBI" id="CHEBI:30616"/>
    </ligand>
</feature>
<feature type="binding site" evidence="1">
    <location>
        <position position="137"/>
    </location>
    <ligand>
        <name>CTP</name>
        <dbReference type="ChEBI" id="CHEBI:37563"/>
    </ligand>
</feature>
<feature type="binding site" evidence="1">
    <location>
        <position position="140"/>
    </location>
    <ligand>
        <name>ATP</name>
        <dbReference type="ChEBI" id="CHEBI:30616"/>
    </ligand>
</feature>
<feature type="binding site" evidence="1">
    <location>
        <position position="140"/>
    </location>
    <ligand>
        <name>CTP</name>
        <dbReference type="ChEBI" id="CHEBI:37563"/>
    </ligand>
</feature>
<name>CCA_FRAT1</name>